<dbReference type="EC" id="3.1.3.11" evidence="1"/>
<dbReference type="EMBL" id="CP000964">
    <property type="protein sequence ID" value="ACI09303.1"/>
    <property type="molecule type" value="Genomic_DNA"/>
</dbReference>
<dbReference type="SMR" id="B5Y2X3"/>
<dbReference type="KEGG" id="kpe:KPK_5039"/>
<dbReference type="HOGENOM" id="CLU_039977_2_2_6"/>
<dbReference type="UniPathway" id="UPA00138"/>
<dbReference type="Proteomes" id="UP000001734">
    <property type="component" value="Chromosome"/>
</dbReference>
<dbReference type="GO" id="GO:0005829">
    <property type="term" value="C:cytosol"/>
    <property type="evidence" value="ECO:0007669"/>
    <property type="project" value="TreeGrafter"/>
</dbReference>
<dbReference type="GO" id="GO:0042132">
    <property type="term" value="F:fructose 1,6-bisphosphate 1-phosphatase activity"/>
    <property type="evidence" value="ECO:0007669"/>
    <property type="project" value="UniProtKB-UniRule"/>
</dbReference>
<dbReference type="GO" id="GO:0000287">
    <property type="term" value="F:magnesium ion binding"/>
    <property type="evidence" value="ECO:0007669"/>
    <property type="project" value="UniProtKB-UniRule"/>
</dbReference>
<dbReference type="GO" id="GO:0030388">
    <property type="term" value="P:fructose 1,6-bisphosphate metabolic process"/>
    <property type="evidence" value="ECO:0007669"/>
    <property type="project" value="TreeGrafter"/>
</dbReference>
<dbReference type="GO" id="GO:0006002">
    <property type="term" value="P:fructose 6-phosphate metabolic process"/>
    <property type="evidence" value="ECO:0007669"/>
    <property type="project" value="TreeGrafter"/>
</dbReference>
<dbReference type="GO" id="GO:0006000">
    <property type="term" value="P:fructose metabolic process"/>
    <property type="evidence" value="ECO:0007669"/>
    <property type="project" value="TreeGrafter"/>
</dbReference>
<dbReference type="GO" id="GO:0006094">
    <property type="term" value="P:gluconeogenesis"/>
    <property type="evidence" value="ECO:0007669"/>
    <property type="project" value="UniProtKB-UniRule"/>
</dbReference>
<dbReference type="GO" id="GO:0005986">
    <property type="term" value="P:sucrose biosynthetic process"/>
    <property type="evidence" value="ECO:0007669"/>
    <property type="project" value="TreeGrafter"/>
</dbReference>
<dbReference type="CDD" id="cd00354">
    <property type="entry name" value="FBPase"/>
    <property type="match status" value="1"/>
</dbReference>
<dbReference type="FunFam" id="3.30.540.10:FF:000002">
    <property type="entry name" value="Fructose-1,6-bisphosphatase class 1"/>
    <property type="match status" value="1"/>
</dbReference>
<dbReference type="FunFam" id="3.40.190.80:FF:000001">
    <property type="entry name" value="Fructose-1,6-bisphosphatase class 1"/>
    <property type="match status" value="1"/>
</dbReference>
<dbReference type="Gene3D" id="3.40.190.80">
    <property type="match status" value="1"/>
</dbReference>
<dbReference type="Gene3D" id="3.30.540.10">
    <property type="entry name" value="Fructose-1,6-Bisphosphatase, subunit A, domain 1"/>
    <property type="match status" value="1"/>
</dbReference>
<dbReference type="HAMAP" id="MF_01855">
    <property type="entry name" value="FBPase_class1"/>
    <property type="match status" value="1"/>
</dbReference>
<dbReference type="InterPro" id="IPR044015">
    <property type="entry name" value="FBPase_C_dom"/>
</dbReference>
<dbReference type="InterPro" id="IPR000146">
    <property type="entry name" value="FBPase_class-1"/>
</dbReference>
<dbReference type="InterPro" id="IPR033391">
    <property type="entry name" value="FBPase_N"/>
</dbReference>
<dbReference type="InterPro" id="IPR028343">
    <property type="entry name" value="FBPtase"/>
</dbReference>
<dbReference type="InterPro" id="IPR020548">
    <property type="entry name" value="Fructose_bisphosphatase_AS"/>
</dbReference>
<dbReference type="NCBIfam" id="NF006778">
    <property type="entry name" value="PRK09293.1-1"/>
    <property type="match status" value="1"/>
</dbReference>
<dbReference type="NCBIfam" id="NF006779">
    <property type="entry name" value="PRK09293.1-3"/>
    <property type="match status" value="1"/>
</dbReference>
<dbReference type="PANTHER" id="PTHR11556">
    <property type="entry name" value="FRUCTOSE-1,6-BISPHOSPHATASE-RELATED"/>
    <property type="match status" value="1"/>
</dbReference>
<dbReference type="PANTHER" id="PTHR11556:SF35">
    <property type="entry name" value="SEDOHEPTULOSE-1,7-BISPHOSPHATASE, CHLOROPLASTIC"/>
    <property type="match status" value="1"/>
</dbReference>
<dbReference type="Pfam" id="PF00316">
    <property type="entry name" value="FBPase"/>
    <property type="match status" value="1"/>
</dbReference>
<dbReference type="Pfam" id="PF18913">
    <property type="entry name" value="FBPase_C"/>
    <property type="match status" value="1"/>
</dbReference>
<dbReference type="PIRSF" id="PIRSF500210">
    <property type="entry name" value="FBPtase"/>
    <property type="match status" value="1"/>
</dbReference>
<dbReference type="PIRSF" id="PIRSF000904">
    <property type="entry name" value="FBPtase_SBPase"/>
    <property type="match status" value="1"/>
</dbReference>
<dbReference type="PRINTS" id="PR00115">
    <property type="entry name" value="F16BPHPHTASE"/>
</dbReference>
<dbReference type="SUPFAM" id="SSF56655">
    <property type="entry name" value="Carbohydrate phosphatase"/>
    <property type="match status" value="1"/>
</dbReference>
<dbReference type="PROSITE" id="PS00124">
    <property type="entry name" value="FBPASE"/>
    <property type="match status" value="1"/>
</dbReference>
<reference key="1">
    <citation type="journal article" date="2008" name="PLoS Genet.">
        <title>Complete genome sequence of the N2-fixing broad host range endophyte Klebsiella pneumoniae 342 and virulence predictions verified in mice.</title>
        <authorList>
            <person name="Fouts D.E."/>
            <person name="Tyler H.L."/>
            <person name="DeBoy R.T."/>
            <person name="Daugherty S."/>
            <person name="Ren Q."/>
            <person name="Badger J.H."/>
            <person name="Durkin A.S."/>
            <person name="Huot H."/>
            <person name="Shrivastava S."/>
            <person name="Kothari S."/>
            <person name="Dodson R.J."/>
            <person name="Mohamoud Y."/>
            <person name="Khouri H."/>
            <person name="Roesch L.F.W."/>
            <person name="Krogfelt K.A."/>
            <person name="Struve C."/>
            <person name="Triplett E.W."/>
            <person name="Methe B.A."/>
        </authorList>
    </citation>
    <scope>NUCLEOTIDE SEQUENCE [LARGE SCALE GENOMIC DNA]</scope>
    <source>
        <strain>342</strain>
    </source>
</reference>
<feature type="chain" id="PRO_0000364581" description="Fructose-1,6-bisphosphatase class 1">
    <location>
        <begin position="1"/>
        <end position="332"/>
    </location>
</feature>
<feature type="binding site" evidence="1">
    <location>
        <position position="89"/>
    </location>
    <ligand>
        <name>Mg(2+)</name>
        <dbReference type="ChEBI" id="CHEBI:18420"/>
        <label>1</label>
    </ligand>
</feature>
<feature type="binding site" evidence="1">
    <location>
        <position position="110"/>
    </location>
    <ligand>
        <name>Mg(2+)</name>
        <dbReference type="ChEBI" id="CHEBI:18420"/>
        <label>1</label>
    </ligand>
</feature>
<feature type="binding site" evidence="1">
    <location>
        <position position="110"/>
    </location>
    <ligand>
        <name>Mg(2+)</name>
        <dbReference type="ChEBI" id="CHEBI:18420"/>
        <label>2</label>
    </ligand>
</feature>
<feature type="binding site" evidence="1">
    <location>
        <position position="112"/>
    </location>
    <ligand>
        <name>Mg(2+)</name>
        <dbReference type="ChEBI" id="CHEBI:18420"/>
        <label>1</label>
    </ligand>
</feature>
<feature type="binding site" evidence="1">
    <location>
        <begin position="113"/>
        <end position="116"/>
    </location>
    <ligand>
        <name>substrate</name>
    </ligand>
</feature>
<feature type="binding site" evidence="1">
    <location>
        <position position="113"/>
    </location>
    <ligand>
        <name>Mg(2+)</name>
        <dbReference type="ChEBI" id="CHEBI:18420"/>
        <label>2</label>
    </ligand>
</feature>
<feature type="binding site" evidence="1">
    <location>
        <position position="206"/>
    </location>
    <ligand>
        <name>substrate</name>
    </ligand>
</feature>
<feature type="binding site" evidence="1">
    <location>
        <position position="239"/>
    </location>
    <ligand>
        <name>substrate</name>
    </ligand>
</feature>
<feature type="binding site" evidence="1">
    <location>
        <begin position="257"/>
        <end position="259"/>
    </location>
    <ligand>
        <name>substrate</name>
    </ligand>
</feature>
<feature type="binding site" evidence="1">
    <location>
        <position position="269"/>
    </location>
    <ligand>
        <name>substrate</name>
    </ligand>
</feature>
<feature type="binding site" evidence="1">
    <location>
        <position position="275"/>
    </location>
    <ligand>
        <name>Mg(2+)</name>
        <dbReference type="ChEBI" id="CHEBI:18420"/>
        <label>2</label>
    </ligand>
</feature>
<comment type="catalytic activity">
    <reaction evidence="1">
        <text>beta-D-fructose 1,6-bisphosphate + H2O = beta-D-fructose 6-phosphate + phosphate</text>
        <dbReference type="Rhea" id="RHEA:11064"/>
        <dbReference type="ChEBI" id="CHEBI:15377"/>
        <dbReference type="ChEBI" id="CHEBI:32966"/>
        <dbReference type="ChEBI" id="CHEBI:43474"/>
        <dbReference type="ChEBI" id="CHEBI:57634"/>
        <dbReference type="EC" id="3.1.3.11"/>
    </reaction>
</comment>
<comment type="cofactor">
    <cofactor evidence="1">
        <name>Mg(2+)</name>
        <dbReference type="ChEBI" id="CHEBI:18420"/>
    </cofactor>
    <text evidence="1">Binds 2 magnesium ions per subunit.</text>
</comment>
<comment type="pathway">
    <text evidence="1">Carbohydrate biosynthesis; gluconeogenesis.</text>
</comment>
<comment type="subunit">
    <text evidence="1">Homotetramer.</text>
</comment>
<comment type="subcellular location">
    <subcellularLocation>
        <location evidence="1">Cytoplasm</location>
    </subcellularLocation>
</comment>
<comment type="similarity">
    <text evidence="1">Belongs to the FBPase class 1 family.</text>
</comment>
<keyword id="KW-0119">Carbohydrate metabolism</keyword>
<keyword id="KW-0963">Cytoplasm</keyword>
<keyword id="KW-0378">Hydrolase</keyword>
<keyword id="KW-0460">Magnesium</keyword>
<keyword id="KW-0479">Metal-binding</keyword>
<sequence length="332" mass="36819">MKTLGEFIVEKQHEFSHATGELTALLSAIKLGAKIIHRDINKAGLVDILGASGAENVQGEVQQKLDLFANEKLKAALRARDIVAGIASEEEDEIVVFEGCEHAKYVVLMDPLDGSSNIDVNVSVGTIFSIYRRVTPVGTPVTEEDFLQPGNRQVAAGYVVYGSSTMLVYTTGCGVHAFTYDPSLGVFCLCQERMRFPEKGNTYSINEGNYIKFPQGVKKYIKYCQEEDKETQRPYTSRYIGSLVADFHRNLLKGGIYLYPSTASHPDGKLRLLYECNPMAFLAEQAGGKASDGKERILDIIPESLHQRRSFFVGNNHMVEDVENFIKAFPDA</sequence>
<proteinExistence type="inferred from homology"/>
<accession>B5Y2X3</accession>
<evidence type="ECO:0000255" key="1">
    <source>
        <dbReference type="HAMAP-Rule" id="MF_01855"/>
    </source>
</evidence>
<organism>
    <name type="scientific">Klebsiella pneumoniae (strain 342)</name>
    <dbReference type="NCBI Taxonomy" id="507522"/>
    <lineage>
        <taxon>Bacteria</taxon>
        <taxon>Pseudomonadati</taxon>
        <taxon>Pseudomonadota</taxon>
        <taxon>Gammaproteobacteria</taxon>
        <taxon>Enterobacterales</taxon>
        <taxon>Enterobacteriaceae</taxon>
        <taxon>Klebsiella/Raoultella group</taxon>
        <taxon>Klebsiella</taxon>
        <taxon>Klebsiella pneumoniae complex</taxon>
    </lineage>
</organism>
<protein>
    <recommendedName>
        <fullName evidence="1">Fructose-1,6-bisphosphatase class 1</fullName>
        <shortName evidence="1">FBPase class 1</shortName>
        <ecNumber evidence="1">3.1.3.11</ecNumber>
    </recommendedName>
    <alternativeName>
        <fullName evidence="1">D-fructose-1,6-bisphosphate 1-phosphohydrolase class 1</fullName>
    </alternativeName>
</protein>
<gene>
    <name evidence="1" type="primary">fbp</name>
    <name type="ordered locus">KPK_5039</name>
</gene>
<name>F16PA_KLEP3</name>